<reference evidence="6 7" key="1">
    <citation type="journal article" date="1998" name="J. Biol. Chem.">
        <title>Characterization of FEN-1 from Xenopus laevis. cDNA cloning and role in DNA metabolism.</title>
        <authorList>
            <person name="Bibikova M."/>
            <person name="Wu B."/>
            <person name="Chi E."/>
            <person name="Kim K.-H."/>
            <person name="Trautman J.K."/>
            <person name="Carroll D."/>
        </authorList>
    </citation>
    <scope>NUCLEOTIDE SEQUENCE [MRNA]</scope>
    <scope>FUNCTION</scope>
    <scope>COFACTOR</scope>
    <scope>IDENTIFICATION IN A COMPLEX WITH PCNA</scope>
    <scope>SUBCELLULAR LOCATION</scope>
    <scope>DEVELOPMENTAL STAGE</scope>
    <source>
        <tissue evidence="5">Tadpole head</tissue>
    </source>
</reference>
<reference key="2">
    <citation type="submission" date="2008-11" db="EMBL/GenBank/DDBJ databases">
        <authorList>
            <consortium name="NIH - Xenopus Gene Collection (XGC) project"/>
        </authorList>
    </citation>
    <scope>NUCLEOTIDE SEQUENCE [LARGE SCALE MRNA]</scope>
    <source>
        <tissue>Gastrula</tissue>
    </source>
</reference>
<name>FEN1B_XENLA</name>
<dbReference type="EC" id="3.1.-.-" evidence="3"/>
<dbReference type="EMBL" id="U68141">
    <property type="protein sequence ID" value="AAB08478.1"/>
    <property type="molecule type" value="mRNA"/>
</dbReference>
<dbReference type="EMBL" id="BC169390">
    <property type="protein sequence ID" value="AAI69390.1"/>
    <property type="molecule type" value="mRNA"/>
</dbReference>
<dbReference type="EMBL" id="BC169394">
    <property type="protein sequence ID" value="AAI69394.1"/>
    <property type="molecule type" value="mRNA"/>
</dbReference>
<dbReference type="RefSeq" id="NP_001080984.1">
    <property type="nucleotide sequence ID" value="NM_001087515.1"/>
</dbReference>
<dbReference type="SMR" id="P70054"/>
<dbReference type="GeneID" id="394311"/>
<dbReference type="KEGG" id="xla:394311"/>
<dbReference type="AGR" id="Xenbase:XB-GENE-6254462"/>
<dbReference type="CTD" id="394311"/>
<dbReference type="Xenbase" id="XB-GENE-6254462">
    <property type="gene designation" value="fen1.S"/>
</dbReference>
<dbReference type="OMA" id="MGIPWVQ"/>
<dbReference type="OrthoDB" id="1937206at2759"/>
<dbReference type="Proteomes" id="UP000186698">
    <property type="component" value="Chromosome 4S"/>
</dbReference>
<dbReference type="Bgee" id="394311">
    <property type="expression patterns" value="Expressed in testis and 19 other cell types or tissues"/>
</dbReference>
<dbReference type="GO" id="GO:0005739">
    <property type="term" value="C:mitochondrion"/>
    <property type="evidence" value="ECO:0007669"/>
    <property type="project" value="UniProtKB-SubCell"/>
</dbReference>
<dbReference type="GO" id="GO:0005730">
    <property type="term" value="C:nucleolus"/>
    <property type="evidence" value="ECO:0007669"/>
    <property type="project" value="UniProtKB-SubCell"/>
</dbReference>
<dbReference type="GO" id="GO:0005654">
    <property type="term" value="C:nucleoplasm"/>
    <property type="evidence" value="ECO:0007669"/>
    <property type="project" value="UniProtKB-SubCell"/>
</dbReference>
<dbReference type="GO" id="GO:0005634">
    <property type="term" value="C:nucleus"/>
    <property type="evidence" value="ECO:0000314"/>
    <property type="project" value="UniProtKB"/>
</dbReference>
<dbReference type="GO" id="GO:0008409">
    <property type="term" value="F:5'-3' exonuclease activity"/>
    <property type="evidence" value="ECO:0000318"/>
    <property type="project" value="GO_Central"/>
</dbReference>
<dbReference type="GO" id="GO:0017108">
    <property type="term" value="F:5'-flap endonuclease activity"/>
    <property type="evidence" value="ECO:0000314"/>
    <property type="project" value="UniProtKB"/>
</dbReference>
<dbReference type="GO" id="GO:0003677">
    <property type="term" value="F:DNA binding"/>
    <property type="evidence" value="ECO:0007669"/>
    <property type="project" value="UniProtKB-UniRule"/>
</dbReference>
<dbReference type="GO" id="GO:0000287">
    <property type="term" value="F:magnesium ion binding"/>
    <property type="evidence" value="ECO:0000318"/>
    <property type="project" value="GO_Central"/>
</dbReference>
<dbReference type="GO" id="GO:0030145">
    <property type="term" value="F:manganese ion binding"/>
    <property type="evidence" value="ECO:0000318"/>
    <property type="project" value="GO_Central"/>
</dbReference>
<dbReference type="GO" id="GO:0004523">
    <property type="term" value="F:RNA-DNA hybrid ribonuclease activity"/>
    <property type="evidence" value="ECO:0000318"/>
    <property type="project" value="GO_Central"/>
</dbReference>
<dbReference type="GO" id="GO:0006284">
    <property type="term" value="P:base-excision repair"/>
    <property type="evidence" value="ECO:0000250"/>
    <property type="project" value="UniProtKB"/>
</dbReference>
<dbReference type="GO" id="GO:0006260">
    <property type="term" value="P:DNA replication"/>
    <property type="evidence" value="ECO:0000353"/>
    <property type="project" value="UniProtKB"/>
</dbReference>
<dbReference type="GO" id="GO:0043137">
    <property type="term" value="P:DNA replication, removal of RNA primer"/>
    <property type="evidence" value="ECO:0007669"/>
    <property type="project" value="UniProtKB-UniRule"/>
</dbReference>
<dbReference type="CDD" id="cd00080">
    <property type="entry name" value="H3TH_StructSpec-5'-nucleases"/>
    <property type="match status" value="1"/>
</dbReference>
<dbReference type="CDD" id="cd09867">
    <property type="entry name" value="PIN_FEN1"/>
    <property type="match status" value="1"/>
</dbReference>
<dbReference type="FunFam" id="1.10.150.20:FF:000009">
    <property type="entry name" value="Flap endonuclease 1"/>
    <property type="match status" value="1"/>
</dbReference>
<dbReference type="FunFam" id="3.40.50.1010:FF:000003">
    <property type="entry name" value="Flap endonuclease 1"/>
    <property type="match status" value="1"/>
</dbReference>
<dbReference type="Gene3D" id="1.10.150.20">
    <property type="entry name" value="5' to 3' exonuclease, C-terminal subdomain"/>
    <property type="match status" value="1"/>
</dbReference>
<dbReference type="Gene3D" id="3.40.50.1010">
    <property type="entry name" value="5'-nuclease"/>
    <property type="match status" value="1"/>
</dbReference>
<dbReference type="HAMAP" id="MF_00614">
    <property type="entry name" value="Fen"/>
    <property type="match status" value="1"/>
</dbReference>
<dbReference type="InterPro" id="IPR036279">
    <property type="entry name" value="5-3_exonuclease_C_sf"/>
</dbReference>
<dbReference type="InterPro" id="IPR023426">
    <property type="entry name" value="Flap_endonuc"/>
</dbReference>
<dbReference type="InterPro" id="IPR008918">
    <property type="entry name" value="HhH2"/>
</dbReference>
<dbReference type="InterPro" id="IPR029060">
    <property type="entry name" value="PIN-like_dom_sf"/>
</dbReference>
<dbReference type="InterPro" id="IPR006086">
    <property type="entry name" value="XPG-I_dom"/>
</dbReference>
<dbReference type="InterPro" id="IPR006084">
    <property type="entry name" value="XPG/Rad2"/>
</dbReference>
<dbReference type="InterPro" id="IPR019974">
    <property type="entry name" value="XPG_CS"/>
</dbReference>
<dbReference type="InterPro" id="IPR006085">
    <property type="entry name" value="XPG_DNA_repair_N"/>
</dbReference>
<dbReference type="PANTHER" id="PTHR11081:SF73">
    <property type="entry name" value="FLAP ENDONUCLEASE 1"/>
    <property type="match status" value="1"/>
</dbReference>
<dbReference type="PANTHER" id="PTHR11081">
    <property type="entry name" value="FLAP ENDONUCLEASE FAMILY MEMBER"/>
    <property type="match status" value="1"/>
</dbReference>
<dbReference type="Pfam" id="PF00867">
    <property type="entry name" value="XPG_I"/>
    <property type="match status" value="1"/>
</dbReference>
<dbReference type="Pfam" id="PF00752">
    <property type="entry name" value="XPG_N"/>
    <property type="match status" value="1"/>
</dbReference>
<dbReference type="PRINTS" id="PR00853">
    <property type="entry name" value="XPGRADSUPER"/>
</dbReference>
<dbReference type="SMART" id="SM00279">
    <property type="entry name" value="HhH2"/>
    <property type="match status" value="1"/>
</dbReference>
<dbReference type="SMART" id="SM00484">
    <property type="entry name" value="XPGI"/>
    <property type="match status" value="1"/>
</dbReference>
<dbReference type="SMART" id="SM00485">
    <property type="entry name" value="XPGN"/>
    <property type="match status" value="1"/>
</dbReference>
<dbReference type="SUPFAM" id="SSF47807">
    <property type="entry name" value="5' to 3' exonuclease, C-terminal subdomain"/>
    <property type="match status" value="1"/>
</dbReference>
<dbReference type="SUPFAM" id="SSF88723">
    <property type="entry name" value="PIN domain-like"/>
    <property type="match status" value="1"/>
</dbReference>
<dbReference type="PROSITE" id="PS00841">
    <property type="entry name" value="XPG_1"/>
    <property type="match status" value="1"/>
</dbReference>
<protein>
    <recommendedName>
        <fullName evidence="3">Flap endonuclease 1-B</fullName>
        <shortName evidence="3">FEN-1-B</shortName>
        <ecNumber evidence="3">3.1.-.-</ecNumber>
    </recommendedName>
    <alternativeName>
        <fullName evidence="3">Flap structure-specific endonuclease 1-B</fullName>
        <shortName>xFEN-1b</shortName>
    </alternativeName>
</protein>
<keyword id="KW-0227">DNA damage</keyword>
<keyword id="KW-0234">DNA repair</keyword>
<keyword id="KW-0235">DNA replication</keyword>
<keyword id="KW-0255">Endonuclease</keyword>
<keyword id="KW-0269">Exonuclease</keyword>
<keyword id="KW-0378">Hydrolase</keyword>
<keyword id="KW-0460">Magnesium</keyword>
<keyword id="KW-0479">Metal-binding</keyword>
<keyword id="KW-0496">Mitochondrion</keyword>
<keyword id="KW-0540">Nuclease</keyword>
<keyword id="KW-0539">Nucleus</keyword>
<keyword id="KW-0597">Phosphoprotein</keyword>
<keyword id="KW-1185">Reference proteome</keyword>
<feature type="chain" id="PRO_0000244492" description="Flap endonuclease 1-B">
    <location>
        <begin position="1"/>
        <end position="382"/>
    </location>
</feature>
<feature type="region of interest" description="N-domain" evidence="2">
    <location>
        <begin position="1"/>
        <end position="104"/>
    </location>
</feature>
<feature type="region of interest" description="I-domain" evidence="2">
    <location>
        <begin position="122"/>
        <end position="253"/>
    </location>
</feature>
<feature type="region of interest" description="Interaction with PCNA" evidence="3">
    <location>
        <begin position="336"/>
        <end position="344"/>
    </location>
</feature>
<feature type="region of interest" description="Disordered" evidence="4">
    <location>
        <begin position="352"/>
        <end position="382"/>
    </location>
</feature>
<feature type="binding site" evidence="3">
    <location>
        <position position="34"/>
    </location>
    <ligand>
        <name>Mg(2+)</name>
        <dbReference type="ChEBI" id="CHEBI:18420"/>
        <label>1</label>
    </ligand>
</feature>
<feature type="binding site" evidence="1 3">
    <location>
        <position position="47"/>
    </location>
    <ligand>
        <name>DNA</name>
        <dbReference type="ChEBI" id="CHEBI:16991"/>
    </ligand>
</feature>
<feature type="binding site" evidence="1 3">
    <location>
        <position position="70"/>
    </location>
    <ligand>
        <name>DNA</name>
        <dbReference type="ChEBI" id="CHEBI:16991"/>
    </ligand>
</feature>
<feature type="binding site" evidence="3">
    <location>
        <position position="86"/>
    </location>
    <ligand>
        <name>Mg(2+)</name>
        <dbReference type="ChEBI" id="CHEBI:18420"/>
        <label>1</label>
    </ligand>
</feature>
<feature type="binding site" evidence="1 3">
    <location>
        <position position="158"/>
    </location>
    <ligand>
        <name>DNA</name>
        <dbReference type="ChEBI" id="CHEBI:16991"/>
    </ligand>
</feature>
<feature type="binding site" evidence="3">
    <location>
        <position position="158"/>
    </location>
    <ligand>
        <name>Mg(2+)</name>
        <dbReference type="ChEBI" id="CHEBI:18420"/>
        <label>1</label>
    </ligand>
</feature>
<feature type="binding site" evidence="3">
    <location>
        <position position="160"/>
    </location>
    <ligand>
        <name>Mg(2+)</name>
        <dbReference type="ChEBI" id="CHEBI:18420"/>
        <label>1</label>
    </ligand>
</feature>
<feature type="binding site" evidence="3">
    <location>
        <position position="179"/>
    </location>
    <ligand>
        <name>Mg(2+)</name>
        <dbReference type="ChEBI" id="CHEBI:18420"/>
        <label>2</label>
    </ligand>
</feature>
<feature type="binding site" evidence="3">
    <location>
        <position position="181"/>
    </location>
    <ligand>
        <name>Mg(2+)</name>
        <dbReference type="ChEBI" id="CHEBI:18420"/>
        <label>2</label>
    </ligand>
</feature>
<feature type="binding site" evidence="1 3">
    <location>
        <position position="231"/>
    </location>
    <ligand>
        <name>DNA</name>
        <dbReference type="ChEBI" id="CHEBI:16991"/>
    </ligand>
</feature>
<feature type="binding site" evidence="1 3">
    <location>
        <position position="233"/>
    </location>
    <ligand>
        <name>DNA</name>
        <dbReference type="ChEBI" id="CHEBI:16991"/>
    </ligand>
</feature>
<feature type="binding site" evidence="3">
    <location>
        <position position="233"/>
    </location>
    <ligand>
        <name>Mg(2+)</name>
        <dbReference type="ChEBI" id="CHEBI:18420"/>
        <label>2</label>
    </ligand>
</feature>
<proteinExistence type="evidence at protein level"/>
<evidence type="ECO:0000250" key="1">
    <source>
        <dbReference type="UniProtKB" id="P39748"/>
    </source>
</evidence>
<evidence type="ECO:0000255" key="2"/>
<evidence type="ECO:0000255" key="3">
    <source>
        <dbReference type="HAMAP-Rule" id="MF_03140"/>
    </source>
</evidence>
<evidence type="ECO:0000256" key="4">
    <source>
        <dbReference type="SAM" id="MobiDB-lite"/>
    </source>
</evidence>
<evidence type="ECO:0000269" key="5">
    <source>
    </source>
</evidence>
<evidence type="ECO:0000305" key="6"/>
<evidence type="ECO:0000312" key="7">
    <source>
        <dbReference type="EMBL" id="AAB08478.1"/>
    </source>
</evidence>
<gene>
    <name type="primary">fen1-b</name>
</gene>
<sequence length="382" mass="42865">MGIHGLAKLIADVAPAAIKEHDIKSYFGRKVAVDASMCIYQFLIAVRQDGNMLQNEEGETTSHLMGMFYRTIRMLEHGIKPVYVFDGKPPQMKSGELAKRSERRAEAEKLLEAAEEAGEVENIEKFNKRLVKVTKQHNEECKKLLSLMGIPYVDAPCEAEATCAALVKAGKVYAAATEDMDALTFGTPVLLRHLTASEAKKLPIQEFHLNRVFQDIGINHEQFVDLCILLGSDYCETIRGIGPKRAIDLIRQHKTIEEIIDNIDLKKYPIPENWLHKEARQLFLEPEVIDADITELKWTEPDEEGLVAFMCGEKQFSEDRIRNGAKKLAKNRQGSTQGRLDDFFKVTGSISSTKRKEVESKGSTKKKSKTGGTPAGKFKRGK</sequence>
<accession>P70054</accession>
<accession>B7ZPB1</accession>
<comment type="function">
    <text evidence="3 5">Structure-specific nuclease with 5'-flap endonuclease and 5'-3' exonuclease activities involved in DNA replication and repair. During DNA replication, cleaves the 5'-overhanging flap structure that is generated by displacement synthesis when DNA polymerase encounters the 5'-end of a downstream Okazaki fragment. It enters the flap from the 5'-end and then tracks to cleave the flap base, leaving a nick for ligation. Also involved in the long patch base excision repair (LP-BER) pathway, by cleaving within the apurinic/apyrimidinic (AP) site-terminated flap. Acts as a genome stabilization factor that prevents flaps from equilibrating into structures that lead to duplications and deletions. Also possesses 5'-3' exonuclease activity on nicked or gapped double-stranded DNA, and exhibits RNase H activity. Also involved in replication and repair of rDNA and in repairing mitochondrial DNA.</text>
</comment>
<comment type="cofactor">
    <cofactor evidence="3">
        <name>Mg(2+)</name>
        <dbReference type="ChEBI" id="CHEBI:18420"/>
    </cofactor>
    <text evidence="3">Binds 2 magnesium ions per subunit. They probably participate in the reaction catalyzed by the enzyme. May bind an additional third magnesium ion after substrate binding.</text>
</comment>
<comment type="subunit">
    <text evidence="3">Interacts with PCNA. Three molecules of fen1 bind to one PCNA trimer with each molecule binding to one PCNA monomer. PCNA stimulates the nuclease activity without altering cleavage specificity.</text>
</comment>
<comment type="subcellular location">
    <subcellularLocation>
        <location evidence="3">Nucleus</location>
        <location evidence="3">Nucleolus</location>
    </subcellularLocation>
    <subcellularLocation>
        <location evidence="3">Nucleus</location>
        <location evidence="3">Nucleoplasm</location>
    </subcellularLocation>
    <subcellularLocation>
        <location evidence="3">Mitochondrion</location>
    </subcellularLocation>
    <text evidence="3">Resides mostly in the nucleoli and relocalizes to the nucleoplasm upon DNA damage.</text>
</comment>
<comment type="developmental stage">
    <text evidence="5">First expressed at a low level in stage II oocytes. Expression increases dramatically from oocyte stages III to V (at protein level). Also expressed in embryos.</text>
</comment>
<comment type="PTM">
    <text evidence="3">Phosphorylated. Phosphorylation upon DNA damage induces relocalization to the nuclear plasma.</text>
</comment>
<comment type="similarity">
    <text evidence="1 3">Belongs to the XPG/RAD2 endonuclease family. FEN1 subfamily.</text>
</comment>
<organism>
    <name type="scientific">Xenopus laevis</name>
    <name type="common">African clawed frog</name>
    <dbReference type="NCBI Taxonomy" id="8355"/>
    <lineage>
        <taxon>Eukaryota</taxon>
        <taxon>Metazoa</taxon>
        <taxon>Chordata</taxon>
        <taxon>Craniata</taxon>
        <taxon>Vertebrata</taxon>
        <taxon>Euteleostomi</taxon>
        <taxon>Amphibia</taxon>
        <taxon>Batrachia</taxon>
        <taxon>Anura</taxon>
        <taxon>Pipoidea</taxon>
        <taxon>Pipidae</taxon>
        <taxon>Xenopodinae</taxon>
        <taxon>Xenopus</taxon>
        <taxon>Xenopus</taxon>
    </lineage>
</organism>